<proteinExistence type="evidence at protein level"/>
<accession>D4QF24</accession>
<sequence>MTVGAGGKTSADADPLMLVRAIADADRRAAHALNLVPSENRISPLASLPLASDFYNRYFFNTDGDPLFWEFRGGEDIAHIEALGAAALRRMASARYCNVRPISGMSAMILTVAALSPPGSTVVSVDQNSGGHYATPALLGRLGRRSRLLNCKDGEVDESELAEVLAPGDVALVYVDVQNCVRVPDFRRMSDVIREVSPGTRLYVDASHYLGLVLGGLLANPLDCGADAFGGSTHKSFPGPHKGVIFTNAEDVDESLRSAQFDLVSSHHFAETLALSLAALEVEDRMGDYARATNDNARRLAGALADAGFRVYGDSATGYTDTHQVWVELDGVAAAYALSNRLAEGGIRVNLQSSMPGMSGVHLRLGSNEVTFEGAGPQAIEELAGALVTARERALGPRTVHEIRGRFGAPFYTDPEKLKVEAGL</sequence>
<dbReference type="EC" id="2.2.1.-" evidence="2"/>
<dbReference type="EMBL" id="AB530986">
    <property type="protein sequence ID" value="BAJ05887.1"/>
    <property type="molecule type" value="Genomic_DNA"/>
</dbReference>
<dbReference type="SMR" id="D4QF24"/>
<dbReference type="GO" id="GO:0005737">
    <property type="term" value="C:cytoplasm"/>
    <property type="evidence" value="ECO:0007669"/>
    <property type="project" value="TreeGrafter"/>
</dbReference>
<dbReference type="GO" id="GO:0004372">
    <property type="term" value="F:glycine hydroxymethyltransferase activity"/>
    <property type="evidence" value="ECO:0007669"/>
    <property type="project" value="TreeGrafter"/>
</dbReference>
<dbReference type="GO" id="GO:0030170">
    <property type="term" value="F:pyridoxal phosphate binding"/>
    <property type="evidence" value="ECO:0007669"/>
    <property type="project" value="TreeGrafter"/>
</dbReference>
<dbReference type="GO" id="GO:0017000">
    <property type="term" value="P:antibiotic biosynthetic process"/>
    <property type="evidence" value="ECO:0007669"/>
    <property type="project" value="UniProtKB-KW"/>
</dbReference>
<dbReference type="GO" id="GO:0019264">
    <property type="term" value="P:glycine biosynthetic process from serine"/>
    <property type="evidence" value="ECO:0007669"/>
    <property type="project" value="TreeGrafter"/>
</dbReference>
<dbReference type="GO" id="GO:0046653">
    <property type="term" value="P:tetrahydrofolate metabolic process"/>
    <property type="evidence" value="ECO:0007669"/>
    <property type="project" value="TreeGrafter"/>
</dbReference>
<dbReference type="Gene3D" id="3.90.1150.10">
    <property type="entry name" value="Aspartate Aminotransferase, domain 1"/>
    <property type="match status" value="1"/>
</dbReference>
<dbReference type="Gene3D" id="3.40.640.10">
    <property type="entry name" value="Type I PLP-dependent aspartate aminotransferase-like (Major domain)"/>
    <property type="match status" value="1"/>
</dbReference>
<dbReference type="InterPro" id="IPR015424">
    <property type="entry name" value="PyrdxlP-dep_Trfase"/>
</dbReference>
<dbReference type="InterPro" id="IPR015421">
    <property type="entry name" value="PyrdxlP-dep_Trfase_major"/>
</dbReference>
<dbReference type="InterPro" id="IPR015422">
    <property type="entry name" value="PyrdxlP-dep_Trfase_small"/>
</dbReference>
<dbReference type="InterPro" id="IPR049943">
    <property type="entry name" value="Ser_HO-MeTrfase-like"/>
</dbReference>
<dbReference type="InterPro" id="IPR039429">
    <property type="entry name" value="SHMT-like_dom"/>
</dbReference>
<dbReference type="PANTHER" id="PTHR11680">
    <property type="entry name" value="SERINE HYDROXYMETHYLTRANSFERASE"/>
    <property type="match status" value="1"/>
</dbReference>
<dbReference type="PANTHER" id="PTHR11680:SF35">
    <property type="entry name" value="SERINE HYDROXYMETHYLTRANSFERASE 1"/>
    <property type="match status" value="1"/>
</dbReference>
<dbReference type="Pfam" id="PF00464">
    <property type="entry name" value="SHMT"/>
    <property type="match status" value="1"/>
</dbReference>
<dbReference type="SUPFAM" id="SSF53383">
    <property type="entry name" value="PLP-dependent transferases"/>
    <property type="match status" value="1"/>
</dbReference>
<organism>
    <name type="scientific">Streptomyces sp</name>
    <dbReference type="NCBI Taxonomy" id="1931"/>
    <lineage>
        <taxon>Bacteria</taxon>
        <taxon>Bacillati</taxon>
        <taxon>Actinomycetota</taxon>
        <taxon>Actinomycetes</taxon>
        <taxon>Kitasatosporales</taxon>
        <taxon>Streptomycetaceae</taxon>
        <taxon>Streptomyces</taxon>
    </lineage>
</organism>
<evidence type="ECO:0000250" key="1">
    <source>
        <dbReference type="UniProtKB" id="P0A825"/>
    </source>
</evidence>
<evidence type="ECO:0000269" key="2">
    <source>
    </source>
</evidence>
<evidence type="ECO:0000303" key="3">
    <source>
    </source>
</evidence>
<evidence type="ECO:0000303" key="4">
    <source>
    </source>
</evidence>
<evidence type="ECO:0000305" key="5"/>
<evidence type="ECO:0000305" key="6">
    <source>
    </source>
</evidence>
<evidence type="ECO:0000305" key="7">
    <source>
    </source>
</evidence>
<keyword id="KW-0045">Antibiotic biosynthesis</keyword>
<keyword id="KW-0663">Pyridoxal phosphate</keyword>
<keyword id="KW-0808">Transferase</keyword>
<comment type="function">
    <text evidence="2">Transaldolase involved in the biosynthesis of the lipopeptidyl nucleoside antibiotic A-90289 (PubMed:23110675). Catalyzes the condensation of L-threonine and uridine-5'-aldehyde to form 5'-C-glycyluridine (GlyU) (PubMed:23110675). Forms (5'S,6'S)-GlyU (PubMed:23110675). Has no activity with alternative amino acids, such as glycine or serine (PubMed:23110675).</text>
</comment>
<comment type="catalytic activity">
    <reaction evidence="2">
        <text>uridine-5'-aldehyde + L-threonine = (5'S,6'S)-C-glycyluridine + acetaldehyde</text>
        <dbReference type="Rhea" id="RHEA:77183"/>
        <dbReference type="ChEBI" id="CHEBI:15343"/>
        <dbReference type="ChEBI" id="CHEBI:57926"/>
        <dbReference type="ChEBI" id="CHEBI:86258"/>
        <dbReference type="ChEBI" id="CHEBI:229461"/>
    </reaction>
    <physiologicalReaction direction="left-to-right" evidence="2">
        <dbReference type="Rhea" id="RHEA:77184"/>
    </physiologicalReaction>
</comment>
<comment type="cofactor">
    <cofactor evidence="2">
        <name>pyridoxal 5'-phosphate</name>
        <dbReference type="ChEBI" id="CHEBI:597326"/>
    </cofactor>
</comment>
<comment type="biophysicochemical properties">
    <kinetics>
        <KM evidence="2">29.2 mM for uridine-5'-aldehyde</KM>
        <text evidence="2">kcat is 40 min(-1) with uridine-5'-aldehyde as substrate.</text>
    </kinetics>
    <phDependence>
        <text evidence="2">Optimum pH is 7.5.</text>
    </phDependence>
</comment>
<comment type="pathway">
    <text evidence="6 7">Antibiotic biosynthesis.</text>
</comment>
<comment type="similarity">
    <text evidence="5">Belongs to the SHMT family.</text>
</comment>
<gene>
    <name evidence="3" type="primary">lipK</name>
</gene>
<reference key="1">
    <citation type="journal article" date="2010" name="ChemBioChem">
        <title>The biosynthesis of liposidomycin-like A-90289 antibiotics featuring a new type of sulfotransferase.</title>
        <authorList>
            <person name="Funabashi M."/>
            <person name="Baba S."/>
            <person name="Nonaka K."/>
            <person name="Hosobuchi M."/>
            <person name="Fujita Y."/>
            <person name="Shibata T."/>
            <person name="Van Lanene S.G."/>
        </authorList>
    </citation>
    <scope>NUCLEOTIDE SEQUENCE [GENOMIC DNA]</scope>
    <source>
        <strain>SANK 60405</strain>
    </source>
</reference>
<reference key="2">
    <citation type="journal article" date="2012" name="J. Am. Chem. Soc.">
        <title>Amalgamation of nucleosides and amino acids in antibiotic biosynthesis: discovery of an L-threonine:uridine-5'-aldehyde transaldolase.</title>
        <authorList>
            <person name="Barnard-Britson S."/>
            <person name="Chi X."/>
            <person name="Nonaka K."/>
            <person name="Spork A.P."/>
            <person name="Tibrewal N."/>
            <person name="Goswami A."/>
            <person name="Pahari P."/>
            <person name="Ducho C."/>
            <person name="Rohr J."/>
            <person name="Van Lanen S.G."/>
        </authorList>
    </citation>
    <scope>FUNCTION</scope>
    <scope>CATALYTIC ACTIVITY</scope>
    <scope>COFACTOR</scope>
    <scope>BIOPHYSICOCHEMICAL PROPERTIES</scope>
    <scope>MUTAGENESIS OF LYS-235</scope>
    <source>
        <strain>SANK 60405</strain>
    </source>
</reference>
<name>THTA1_STRSQ</name>
<feature type="chain" id="PRO_0000459783" description="L-threonine:uridine-5'-aldehyde transaldolase">
    <location>
        <begin position="1"/>
        <end position="424"/>
    </location>
</feature>
<feature type="modified residue" description="N6-(pyridoxal phosphate)lysine" evidence="1">
    <location>
        <position position="235"/>
    </location>
</feature>
<feature type="mutagenesis site" description="Loss of activity. Cannot bind pyridoxal phosphate." evidence="2">
    <original>K</original>
    <variation>A</variation>
    <location>
        <position position="235"/>
    </location>
</feature>
<protein>
    <recommendedName>
        <fullName evidence="4">L-threonine:uridine-5'-aldehyde transaldolase</fullName>
        <shortName evidence="5">L-Thr:UA transaldolase</shortName>
        <shortName evidence="4">L-Thr:uridine-5'-aldehyde transaldolase</shortName>
        <ecNumber evidence="2">2.2.1.-</ecNumber>
    </recommendedName>
</protein>